<accession>C0HLT4</accession>
<keyword id="KW-0903">Direct protein sequencing</keyword>
<keyword id="KW-1015">Disulfide bond</keyword>
<keyword id="KW-0646">Protease inhibitor</keyword>
<keyword id="KW-0722">Serine protease inhibitor</keyword>
<dbReference type="SMR" id="C0HLT4"/>
<dbReference type="GO" id="GO:0005576">
    <property type="term" value="C:extracellular region"/>
    <property type="evidence" value="ECO:0007669"/>
    <property type="project" value="InterPro"/>
</dbReference>
<dbReference type="GO" id="GO:0004867">
    <property type="term" value="F:serine-type endopeptidase inhibitor activity"/>
    <property type="evidence" value="ECO:0000314"/>
    <property type="project" value="UniProtKB"/>
</dbReference>
<dbReference type="GO" id="GO:0010951">
    <property type="term" value="P:negative regulation of endopeptidase activity"/>
    <property type="evidence" value="ECO:0000314"/>
    <property type="project" value="UniProtKB"/>
</dbReference>
<dbReference type="Gene3D" id="2.10.69.10">
    <property type="entry name" value="Cysteine Protease (Bromelain) Inhibitor, subunit H"/>
    <property type="match status" value="1"/>
</dbReference>
<dbReference type="InterPro" id="IPR035995">
    <property type="entry name" value="Bowman-Birk_prot_inh"/>
</dbReference>
<dbReference type="InterPro" id="IPR000877">
    <property type="entry name" value="Prot_inh_BBI"/>
</dbReference>
<dbReference type="SMART" id="SM00269">
    <property type="entry name" value="BowB"/>
    <property type="match status" value="1"/>
</dbReference>
<dbReference type="SUPFAM" id="SSF57247">
    <property type="entry name" value="Bowman-Birk inhibitor, BBI"/>
    <property type="match status" value="1"/>
</dbReference>
<feature type="chain" id="PRO_0000452984" description="Bowman-Birk type proteinase inhibitor C1">
    <location>
        <begin position="1"/>
        <end position="60"/>
    </location>
</feature>
<feature type="site" description="Reactive bond for trypsin" evidence="1">
    <location>
        <begin position="13"/>
        <end position="14"/>
    </location>
</feature>
<feature type="disulfide bond" evidence="1">
    <location>
        <begin position="5"/>
        <end position="21"/>
    </location>
</feature>
<feature type="disulfide bond" evidence="1">
    <location>
        <begin position="11"/>
        <end position="19"/>
    </location>
</feature>
<feature type="disulfide bond" evidence="1">
    <location>
        <begin position="28"/>
        <end position="35"/>
    </location>
</feature>
<feature type="disulfide bond" evidence="1">
    <location>
        <begin position="32"/>
        <end position="49"/>
    </location>
</feature>
<sequence length="60" mass="7013">ERPLCNECFICDRSGDPRCLCEDHVPQCHEGCHQCEKVDTRSGTTMYQCRSFEYYDCANE</sequence>
<name>IBBC1_HYAOR</name>
<reference key="1">
    <citation type="journal article" date="2021" name="Biochem. J.">
        <title>Isolation and functional diversity of Bowman-Birk type serine proteinase inhibitors from Hyacinthus orientalis.</title>
        <authorList>
            <person name="Aoki-Shioi N."/>
            <person name="Terada S."/>
            <person name="Hellinger R."/>
            <person name="Furuta Y."/>
            <person name="Gruber C.W."/>
        </authorList>
    </citation>
    <scope>PROTEIN SEQUENCE</scope>
    <scope>FUNCTION</scope>
    <scope>TISSUE SPECIFICITY</scope>
    <source>
        <tissue evidence="3">Bulb</tissue>
    </source>
</reference>
<comment type="function">
    <text evidence="2">Serine protease inhibitor (PubMed:33666645). Strongly inhibits trypsin (Ki = 0.22 nM) and very weakly inhibits chymotrypsin (Ki = 1200 nM) (PubMed:33666645). Does not inhibit bacterial subtilisin (PubMed:33666645).</text>
</comment>
<comment type="tissue specificity">
    <text evidence="2">Expressed in bulb (at protein level).</text>
</comment>
<comment type="similarity">
    <text evidence="4">Belongs to the Bowman-Birk serine protease inhibitor family.</text>
</comment>
<proteinExistence type="evidence at protein level"/>
<organism>
    <name type="scientific">Hyacinthus orientalis</name>
    <name type="common">Common hyacinth</name>
    <dbReference type="NCBI Taxonomy" id="82025"/>
    <lineage>
        <taxon>Eukaryota</taxon>
        <taxon>Viridiplantae</taxon>
        <taxon>Streptophyta</taxon>
        <taxon>Embryophyta</taxon>
        <taxon>Tracheophyta</taxon>
        <taxon>Spermatophyta</taxon>
        <taxon>Magnoliopsida</taxon>
        <taxon>Liliopsida</taxon>
        <taxon>Asparagales</taxon>
        <taxon>Hyacinthaceae</taxon>
        <taxon>Hyacinthoideae</taxon>
        <taxon>Hyacintheae</taxon>
        <taxon>Hyacinthus</taxon>
    </lineage>
</organism>
<evidence type="ECO:0000250" key="1">
    <source>
        <dbReference type="UniProtKB" id="P80321"/>
    </source>
</evidence>
<evidence type="ECO:0000269" key="2">
    <source>
    </source>
</evidence>
<evidence type="ECO:0000303" key="3">
    <source>
    </source>
</evidence>
<evidence type="ECO:0000305" key="4"/>
<protein>
    <recommendedName>
        <fullName evidence="3">Bowman-Birk type proteinase inhibitor C1</fullName>
        <shortName evidence="3">HOSPI-C1</shortName>
    </recommendedName>
</protein>